<comment type="function">
    <text evidence="1">Catalyzes the reversible interconversion of serine and glycine with tetrahydrofolate (THF) serving as the one-carbon carrier. This reaction serves as the major source of one-carbon groups required for the biosynthesis of purines, thymidylate, methionine, and other important biomolecules. Also exhibits THF-independent aldolase activity toward beta-hydroxyamino acids, producing glycine and aldehydes, via a retro-aldol mechanism.</text>
</comment>
<comment type="catalytic activity">
    <reaction evidence="1">
        <text>(6R)-5,10-methylene-5,6,7,8-tetrahydrofolate + glycine + H2O = (6S)-5,6,7,8-tetrahydrofolate + L-serine</text>
        <dbReference type="Rhea" id="RHEA:15481"/>
        <dbReference type="ChEBI" id="CHEBI:15377"/>
        <dbReference type="ChEBI" id="CHEBI:15636"/>
        <dbReference type="ChEBI" id="CHEBI:33384"/>
        <dbReference type="ChEBI" id="CHEBI:57305"/>
        <dbReference type="ChEBI" id="CHEBI:57453"/>
        <dbReference type="EC" id="2.1.2.1"/>
    </reaction>
</comment>
<comment type="cofactor">
    <cofactor evidence="1">
        <name>pyridoxal 5'-phosphate</name>
        <dbReference type="ChEBI" id="CHEBI:597326"/>
    </cofactor>
</comment>
<comment type="pathway">
    <text evidence="1">One-carbon metabolism; tetrahydrofolate interconversion.</text>
</comment>
<comment type="pathway">
    <text evidence="1">Amino-acid biosynthesis; glycine biosynthesis; glycine from L-serine: step 1/1.</text>
</comment>
<comment type="subunit">
    <text evidence="1">Homodimer.</text>
</comment>
<comment type="subcellular location">
    <subcellularLocation>
        <location evidence="1">Cytoplasm</location>
    </subcellularLocation>
</comment>
<comment type="similarity">
    <text evidence="1">Belongs to the SHMT family.</text>
</comment>
<sequence length="414" mass="45138">MFSKDQTLAKTDAELWSAIQKENTRQQEHIELIASENYTSPAVMEAQGTQLTNKYAEGYPGKRYYGGCEYVDIVEQLAIDRLKQLYGADAANVQPNSGSQANQGVFLAVLKPGDTIMGMSLAEGGHLTHGMALNMSGKWFNVVSYGLNDKEEIDYDAMERLAREHKPKLIIAGASAYALRIDFERFAKIAKEIGAYFMVDMAHYAGLIAAGEYPNPVPFADFVTSTTHKSLRGPRGGFILMKAEHEKIINSAIFPGLQGGPLMHVIAGKAVAFKEALAPEFKTYQQQVVKNADALAKALIARGLRIVSNRTESHVMLVDLRAKKITGKDAENLLGSAHITCNKNAIPNDPEKPFVTSGIRLGSPAMTTRGFKEAEATKVGNLIADVLENPNDAATIERVKAEVKKLTDAFPVYG</sequence>
<name>GLYA_JANMA</name>
<reference key="1">
    <citation type="journal article" date="2007" name="PLoS Genet.">
        <title>Genome analysis of Minibacterium massiliensis highlights the convergent evolution of water-living bacteria.</title>
        <authorList>
            <person name="Audic S."/>
            <person name="Robert C."/>
            <person name="Campagna B."/>
            <person name="Parinello H."/>
            <person name="Claverie J.-M."/>
            <person name="Raoult D."/>
            <person name="Drancourt M."/>
        </authorList>
    </citation>
    <scope>NUCLEOTIDE SEQUENCE [LARGE SCALE GENOMIC DNA]</scope>
    <source>
        <strain>Marseille</strain>
    </source>
</reference>
<proteinExistence type="inferred from homology"/>
<protein>
    <recommendedName>
        <fullName evidence="1">Serine hydroxymethyltransferase</fullName>
        <shortName evidence="1">SHMT</shortName>
        <shortName evidence="1">Serine methylase</shortName>
        <ecNumber evidence="1">2.1.2.1</ecNumber>
    </recommendedName>
</protein>
<keyword id="KW-0028">Amino-acid biosynthesis</keyword>
<keyword id="KW-0963">Cytoplasm</keyword>
<keyword id="KW-0554">One-carbon metabolism</keyword>
<keyword id="KW-0663">Pyridoxal phosphate</keyword>
<keyword id="KW-0808">Transferase</keyword>
<feature type="chain" id="PRO_1000006266" description="Serine hydroxymethyltransferase">
    <location>
        <begin position="1"/>
        <end position="414"/>
    </location>
</feature>
<feature type="binding site" evidence="1">
    <location>
        <position position="121"/>
    </location>
    <ligand>
        <name>(6S)-5,6,7,8-tetrahydrofolate</name>
        <dbReference type="ChEBI" id="CHEBI:57453"/>
    </ligand>
</feature>
<feature type="binding site" evidence="1">
    <location>
        <begin position="125"/>
        <end position="127"/>
    </location>
    <ligand>
        <name>(6S)-5,6,7,8-tetrahydrofolate</name>
        <dbReference type="ChEBI" id="CHEBI:57453"/>
    </ligand>
</feature>
<feature type="site" description="Plays an important role in substrate specificity" evidence="1">
    <location>
        <position position="228"/>
    </location>
</feature>
<feature type="modified residue" description="N6-(pyridoxal phosphate)lysine" evidence="1">
    <location>
        <position position="229"/>
    </location>
</feature>
<gene>
    <name evidence="1" type="primary">glyA</name>
    <name type="ordered locus">mma_2443</name>
</gene>
<evidence type="ECO:0000255" key="1">
    <source>
        <dbReference type="HAMAP-Rule" id="MF_00051"/>
    </source>
</evidence>
<organism>
    <name type="scientific">Janthinobacterium sp. (strain Marseille)</name>
    <name type="common">Minibacterium massiliensis</name>
    <dbReference type="NCBI Taxonomy" id="375286"/>
    <lineage>
        <taxon>Bacteria</taxon>
        <taxon>Pseudomonadati</taxon>
        <taxon>Pseudomonadota</taxon>
        <taxon>Betaproteobacteria</taxon>
        <taxon>Burkholderiales</taxon>
        <taxon>Oxalobacteraceae</taxon>
        <taxon>Janthinobacterium</taxon>
    </lineage>
</organism>
<dbReference type="EC" id="2.1.2.1" evidence="1"/>
<dbReference type="EMBL" id="CP000269">
    <property type="protein sequence ID" value="ABR88534.1"/>
    <property type="molecule type" value="Genomic_DNA"/>
</dbReference>
<dbReference type="RefSeq" id="WP_012080296.1">
    <property type="nucleotide sequence ID" value="NC_009659.1"/>
</dbReference>
<dbReference type="SMR" id="A6T0T6"/>
<dbReference type="STRING" id="375286.mma_2443"/>
<dbReference type="KEGG" id="mms:mma_2443"/>
<dbReference type="eggNOG" id="COG0112">
    <property type="taxonomic scope" value="Bacteria"/>
</dbReference>
<dbReference type="HOGENOM" id="CLU_022477_2_1_4"/>
<dbReference type="OrthoDB" id="9803846at2"/>
<dbReference type="UniPathway" id="UPA00193"/>
<dbReference type="UniPathway" id="UPA00288">
    <property type="reaction ID" value="UER01023"/>
</dbReference>
<dbReference type="Proteomes" id="UP000006388">
    <property type="component" value="Chromosome"/>
</dbReference>
<dbReference type="GO" id="GO:0005829">
    <property type="term" value="C:cytosol"/>
    <property type="evidence" value="ECO:0007669"/>
    <property type="project" value="TreeGrafter"/>
</dbReference>
<dbReference type="GO" id="GO:0004372">
    <property type="term" value="F:glycine hydroxymethyltransferase activity"/>
    <property type="evidence" value="ECO:0007669"/>
    <property type="project" value="UniProtKB-UniRule"/>
</dbReference>
<dbReference type="GO" id="GO:0030170">
    <property type="term" value="F:pyridoxal phosphate binding"/>
    <property type="evidence" value="ECO:0007669"/>
    <property type="project" value="UniProtKB-UniRule"/>
</dbReference>
<dbReference type="GO" id="GO:0019264">
    <property type="term" value="P:glycine biosynthetic process from serine"/>
    <property type="evidence" value="ECO:0007669"/>
    <property type="project" value="UniProtKB-UniRule"/>
</dbReference>
<dbReference type="GO" id="GO:0035999">
    <property type="term" value="P:tetrahydrofolate interconversion"/>
    <property type="evidence" value="ECO:0007669"/>
    <property type="project" value="UniProtKB-UniRule"/>
</dbReference>
<dbReference type="CDD" id="cd00378">
    <property type="entry name" value="SHMT"/>
    <property type="match status" value="1"/>
</dbReference>
<dbReference type="FunFam" id="3.40.640.10:FF:000001">
    <property type="entry name" value="Serine hydroxymethyltransferase"/>
    <property type="match status" value="1"/>
</dbReference>
<dbReference type="FunFam" id="3.90.1150.10:FF:000003">
    <property type="entry name" value="Serine hydroxymethyltransferase"/>
    <property type="match status" value="1"/>
</dbReference>
<dbReference type="Gene3D" id="3.90.1150.10">
    <property type="entry name" value="Aspartate Aminotransferase, domain 1"/>
    <property type="match status" value="1"/>
</dbReference>
<dbReference type="Gene3D" id="3.40.640.10">
    <property type="entry name" value="Type I PLP-dependent aspartate aminotransferase-like (Major domain)"/>
    <property type="match status" value="1"/>
</dbReference>
<dbReference type="HAMAP" id="MF_00051">
    <property type="entry name" value="SHMT"/>
    <property type="match status" value="1"/>
</dbReference>
<dbReference type="InterPro" id="IPR015424">
    <property type="entry name" value="PyrdxlP-dep_Trfase"/>
</dbReference>
<dbReference type="InterPro" id="IPR015421">
    <property type="entry name" value="PyrdxlP-dep_Trfase_major"/>
</dbReference>
<dbReference type="InterPro" id="IPR015422">
    <property type="entry name" value="PyrdxlP-dep_Trfase_small"/>
</dbReference>
<dbReference type="InterPro" id="IPR001085">
    <property type="entry name" value="Ser_HO-MeTrfase"/>
</dbReference>
<dbReference type="InterPro" id="IPR049943">
    <property type="entry name" value="Ser_HO-MeTrfase-like"/>
</dbReference>
<dbReference type="InterPro" id="IPR019798">
    <property type="entry name" value="Ser_HO-MeTrfase_PLP_BS"/>
</dbReference>
<dbReference type="InterPro" id="IPR039429">
    <property type="entry name" value="SHMT-like_dom"/>
</dbReference>
<dbReference type="NCBIfam" id="NF000586">
    <property type="entry name" value="PRK00011.1"/>
    <property type="match status" value="1"/>
</dbReference>
<dbReference type="PANTHER" id="PTHR11680">
    <property type="entry name" value="SERINE HYDROXYMETHYLTRANSFERASE"/>
    <property type="match status" value="1"/>
</dbReference>
<dbReference type="PANTHER" id="PTHR11680:SF50">
    <property type="entry name" value="SERINE HYDROXYMETHYLTRANSFERASE"/>
    <property type="match status" value="1"/>
</dbReference>
<dbReference type="Pfam" id="PF00464">
    <property type="entry name" value="SHMT"/>
    <property type="match status" value="1"/>
</dbReference>
<dbReference type="PIRSF" id="PIRSF000412">
    <property type="entry name" value="SHMT"/>
    <property type="match status" value="1"/>
</dbReference>
<dbReference type="SUPFAM" id="SSF53383">
    <property type="entry name" value="PLP-dependent transferases"/>
    <property type="match status" value="1"/>
</dbReference>
<dbReference type="PROSITE" id="PS00096">
    <property type="entry name" value="SHMT"/>
    <property type="match status" value="1"/>
</dbReference>
<accession>A6T0T6</accession>